<reference key="1">
    <citation type="journal article" date="2008" name="J. Virol.">
        <title>Full genome-based classification of rotaviruses reveals a common origin between human Wa-Like and porcine rotavirus strains and human DS-1-like and bovine rotavirus strains.</title>
        <authorList>
            <person name="Matthijnssens J."/>
            <person name="Ciarlet M."/>
            <person name="Heiman E.M."/>
            <person name="Arijs I."/>
            <person name="Delbeke T."/>
            <person name="McDonald S.M."/>
            <person name="Palombo E.A."/>
            <person name="Iturriza-Gomara M."/>
            <person name="Maes P."/>
            <person name="Patton J.T."/>
            <person name="Rahman M."/>
            <person name="Van Ranst M."/>
        </authorList>
    </citation>
    <scope>NUCLEOTIDE SEQUENCE [GENOMIC RNA]</scope>
</reference>
<proteinExistence type="inferred from homology"/>
<feature type="chain" id="PRO_0000368059" description="Inner capsid protein VP2">
    <location>
        <begin position="1"/>
        <end position="890"/>
    </location>
</feature>
<feature type="region of interest" description="5-fold hub; involved in the encapsidation of VP1 and VP3" evidence="1">
    <location>
        <begin position="1"/>
        <end position="88"/>
    </location>
</feature>
<feature type="region of interest" description="Disordered" evidence="2">
    <location>
        <begin position="1"/>
        <end position="46"/>
    </location>
</feature>
<feature type="region of interest" description="Hydrophobic" evidence="1">
    <location>
        <begin position="404"/>
        <end position="424"/>
    </location>
</feature>
<feature type="region of interest" description="Hydrophobic" evidence="1">
    <location>
        <begin position="432"/>
        <end position="452"/>
    </location>
</feature>
<feature type="compositionally biased region" description="Basic and acidic residues" evidence="2">
    <location>
        <begin position="9"/>
        <end position="26"/>
    </location>
</feature>
<feature type="compositionally biased region" description="Polar residues" evidence="2">
    <location>
        <begin position="28"/>
        <end position="42"/>
    </location>
</feature>
<feature type="site" description="Interaction with the intermediate capsid protein VP6" evidence="1">
    <location>
        <position position="232"/>
    </location>
</feature>
<feature type="site" description="Interaction with the intermediate capsid protein VP6" evidence="1">
    <location>
        <position position="236"/>
    </location>
</feature>
<feature type="site" description="Interaction with the intermediate capsid protein VP6" evidence="1">
    <location>
        <position position="849"/>
    </location>
</feature>
<feature type="site" description="Interaction with the intermediate capsid protein VP6" evidence="1">
    <location>
        <position position="851"/>
    </location>
</feature>
<evidence type="ECO:0000255" key="1">
    <source>
        <dbReference type="HAMAP-Rule" id="MF_04127"/>
    </source>
</evidence>
<evidence type="ECO:0000256" key="2">
    <source>
        <dbReference type="SAM" id="MobiDB-lite"/>
    </source>
</evidence>
<protein>
    <recommendedName>
        <fullName evidence="1">Inner capsid protein VP2</fullName>
    </recommendedName>
</protein>
<organism>
    <name type="scientific">Rotavirus A (strain RVA/Human/Japan/YO/1977/G3P1A[8])</name>
    <name type="common">RV-A</name>
    <dbReference type="NCBI Taxonomy" id="578832"/>
    <lineage>
        <taxon>Viruses</taxon>
        <taxon>Riboviria</taxon>
        <taxon>Orthornavirae</taxon>
        <taxon>Duplornaviricota</taxon>
        <taxon>Resentoviricetes</taxon>
        <taxon>Reovirales</taxon>
        <taxon>Sedoreoviridae</taxon>
        <taxon>Rotavirus</taxon>
        <taxon>Rotavirus A</taxon>
    </lineage>
</organism>
<name>VP2_ROTYO</name>
<organismHost>
    <name type="scientific">Homo sapiens</name>
    <name type="common">Human</name>
    <dbReference type="NCBI Taxonomy" id="9606"/>
</organismHost>
<comment type="function">
    <text evidence="1">Inner capsid protein that self-assembles to form an icosahedral capsid with a T=2 symmetry, which consists of 120 copies of VP2, with channels at each of its five-fold vertices. This capsid constitutes the innermost concentric layer of the viral mature particle. It encapsidates the polymerase VP1, the capping enzyme VP3 and the genomic dsRNA, thereby defining the core. The innermost VP2 capsid and the intermediate VP6 capsid remain intact following cell entry to protect the dsRNA from degradation and to prevent unfavorable antiviral responses in the host cell during all the replication cycle of the virus. Nascent transcripts are transcribed within the structural confines of this double-layered particle (DLP) and are extruded through the channels formed by VP2 N-termini. VP2 is required for the replicase activity of VP1 polymerase. Probably recruits a copy of a VP1-VP3 complex, potentially along with a segment of plus-strand RNA, as a decamer of VP2 assembles. May activate the autoinhibited VP1/RNA complex to coordinate packaging and genome replication.</text>
</comment>
<comment type="subunit">
    <text evidence="1">Homodecamer; each decamer is made up of two conformers of VP2, called VP2A and VP2B. Interacts with a VP1-VP3 complex. Interacts with the intermediate capsid protein VP6. Interacts with NSP5. Interacts (via N-terminus) with NSP2.</text>
</comment>
<comment type="subcellular location">
    <subcellularLocation>
        <location evidence="1">Virion</location>
    </subcellularLocation>
    <text evidence="1">Inner capsid protein. Also found in spherical cytoplasmic structures, called virus factories, that appear early after infection and are the site of viral replication and packaging.</text>
</comment>
<comment type="domain">
    <text evidence="1">The N-terminus binds RNA. It is necessary for encapsidation of VP1 and VP3. The N-termini of 10 VP2 molecules form a cylindrical hub underneath each 5-fold axis of the inner capsid.</text>
</comment>
<comment type="PTM">
    <text evidence="1">Sumoylated with SUMO1 and SUMO2. Sumoylation of viral proteins seems to have a positive role on viral replication.</text>
</comment>
<comment type="similarity">
    <text evidence="1">Belongs to the rotavirus VP2 family.</text>
</comment>
<dbReference type="EMBL" id="DQ870498">
    <property type="protein sequence ID" value="ABI60853.1"/>
    <property type="molecule type" value="Genomic_RNA"/>
</dbReference>
<dbReference type="SMR" id="A7J3A3"/>
<dbReference type="GO" id="GO:0039616">
    <property type="term" value="C:T=2 icosahedral viral capsid"/>
    <property type="evidence" value="ECO:0007669"/>
    <property type="project" value="UniProtKB-UniRule"/>
</dbReference>
<dbReference type="GO" id="GO:0039625">
    <property type="term" value="C:viral inner capsid"/>
    <property type="evidence" value="ECO:0007669"/>
    <property type="project" value="UniProtKB-UniRule"/>
</dbReference>
<dbReference type="GO" id="GO:0019013">
    <property type="term" value="C:viral nucleocapsid"/>
    <property type="evidence" value="ECO:0007669"/>
    <property type="project" value="UniProtKB-UniRule"/>
</dbReference>
<dbReference type="GO" id="GO:0003723">
    <property type="term" value="F:RNA binding"/>
    <property type="evidence" value="ECO:0007669"/>
    <property type="project" value="UniProtKB-UniRule"/>
</dbReference>
<dbReference type="HAMAP" id="MF_04123">
    <property type="entry name" value="Rota_VP2"/>
    <property type="match status" value="1"/>
</dbReference>
<dbReference type="HAMAP" id="MF_04127">
    <property type="entry name" value="Rota_VP2_A"/>
    <property type="match status" value="1"/>
</dbReference>
<dbReference type="InterPro" id="IPR007779">
    <property type="entry name" value="Rotavirus_VP2"/>
</dbReference>
<dbReference type="Pfam" id="PF05087">
    <property type="entry name" value="Rota_VP2"/>
    <property type="match status" value="1"/>
</dbReference>
<sequence>MAYRKRGVKRENLPQQHERLQEKEIENNTDVTMENKNNNRKQQLSDKVLSQKEEIITDVQDDIKIADEVKKSSKEESKQLLEILKTKEDHQKEVQYEILQKTIPTFEPKESILKKLEDIRPEQAKKQMKLFRIFEPRQLPIYRTNGEKELRNRWYWKLKKDTLPDGDYDVREYFLNLYDQILIEMPDYLLLKDMAVENKNSRDAGKVVDSETANICDAIFQDEETEGVIRRFIADMRQQVQADRNIVNYPSILHPIDHAFNEYFLNHQLVEPLNNEIIFNYIPERIRNDVNYILNMDMNLPSTARYIRPNLLQDRLNLHDNFESLWDTITTSNYILARSVVPDLKEKELVSTEAQIQKMSQDLQLEALTIQSETQFLAGINSQAANDCFKTLIAAMLSQRTMSLDFVTTNYMSLISGMWLLTVIPNDMFLRESLVACELAIINTIVYPAFGMQRMHYRNGDPQTPFQIAEQQIQNFQVANWLHFINNNRFRQVVIDGVLNQTLNDNIRNGQVINQLMEALMQLSRQQFPTMPVDYKRSIQRGILLLSNRLGQLVDLTRLVSYNYETLMACITMNMQHVQTLTTEKLQLTSVTSLCMLIGNTTVIPSPQTLFHYYNVNVNFHSNYNERINDAVAIITAANRLNLYQKKMKSIVEDFLKRLQIFDVPRVPDDQMYRLRDRLRLLPVERRRLDIFNLILMNMEQIERASDKIAQGVIIAYRDMQLERDEMYGFVNIARNLDGYQQINLEELMRTGDYGQITNMLLNNQPVALVGALPFVTDSSVISLIAKLDATVFAQIVKLRKVDTLKPILYKINSDSNDFYLVANYDWIPTSTTKVYKQVPQPFDFRASMHMLTSNLTFTVYSDLLSFVSADTVEPINAIAFDNMRIMNEL</sequence>
<keyword id="KW-0167">Capsid protein</keyword>
<keyword id="KW-1153">Inner capsid protein</keyword>
<keyword id="KW-0677">Repeat</keyword>
<keyword id="KW-0694">RNA-binding</keyword>
<keyword id="KW-1141">T=2 icosahedral capsid protein</keyword>
<keyword id="KW-0832">Ubl conjugation</keyword>
<keyword id="KW-0946">Virion</keyword>
<accession>A7J3A3</accession>